<accession>B9F4I8</accession>
<accession>B5SVV3</accession>
<accession>B5SVV4</accession>
<accession>B5SVV5</accession>
<accession>Q0DWE0</accession>
<keyword id="KW-0025">Alternative splicing</keyword>
<keyword id="KW-1185">Reference proteome</keyword>
<name>LPA1_ORYSJ</name>
<protein>
    <recommendedName>
        <fullName evidence="4">P-loop NTPase domain-containing protein LPA1</fullName>
    </recommendedName>
    <alternativeName>
        <fullName evidence="3">Protein LOW PHYTIC ACID 1</fullName>
        <shortName evidence="3">OsLpa1</shortName>
    </alternativeName>
</protein>
<comment type="function">
    <text evidence="2">Required for the accumulation of phytic acid in seeds. Phytic acid is the primary storage form of phosphorus in cereal grains and other plant seeds.</text>
</comment>
<comment type="alternative products">
    <event type="alternative splicing"/>
    <isoform>
        <id>B9F4I8-1</id>
        <name>1</name>
        <name evidence="3">OsLpa1.1</name>
        <sequence type="displayed"/>
    </isoform>
    <isoform>
        <id>B9F4I8-2</id>
        <name>2</name>
        <name evidence="3">OsLpa1.2</name>
        <sequence type="described" ref="VSP_057457"/>
    </isoform>
    <isoform>
        <id>B9F4I8-3</id>
        <name>3</name>
        <name evidence="3">OsLpa1.3</name>
        <sequence type="described" ref="VSP_057457 VSP_057458 VSP_057459"/>
    </isoform>
</comment>
<comment type="tissue specificity">
    <text evidence="2">Expressed in roots, leaf blade shoots, leaf sheath shoots and panicles.</text>
</comment>
<comment type="disruption phenotype">
    <text evidence="2">Strong reduction in seed phytic acid with a molar equivalent increase in inorganic phosphate.</text>
</comment>
<comment type="sequence caution" evidence="4">
    <conflict type="erroneous gene model prediction">
        <sequence resource="EMBL-CDS" id="BAF10448"/>
    </conflict>
</comment>
<dbReference type="EMBL" id="EU366951">
    <property type="protein sequence ID" value="ACB38657.1"/>
    <property type="molecule type" value="mRNA"/>
</dbReference>
<dbReference type="EMBL" id="EU366953">
    <property type="protein sequence ID" value="ACB38659.1"/>
    <property type="molecule type" value="mRNA"/>
</dbReference>
<dbReference type="EMBL" id="EU366954">
    <property type="protein sequence ID" value="ACB38660.1"/>
    <property type="molecule type" value="mRNA"/>
</dbReference>
<dbReference type="EMBL" id="AP008208">
    <property type="protein sequence ID" value="BAF10448.1"/>
    <property type="status" value="ALT_SEQ"/>
    <property type="molecule type" value="Genomic_DNA"/>
</dbReference>
<dbReference type="EMBL" id="AP014958">
    <property type="protein sequence ID" value="BAS81607.1"/>
    <property type="molecule type" value="Genomic_DNA"/>
</dbReference>
<dbReference type="EMBL" id="AP014958">
    <property type="protein sequence ID" value="BAS81608.1"/>
    <property type="molecule type" value="Genomic_DNA"/>
</dbReference>
<dbReference type="EMBL" id="CM000139">
    <property type="protein sequence ID" value="EEE58056.1"/>
    <property type="molecule type" value="Genomic_DNA"/>
</dbReference>
<dbReference type="EMBL" id="AK100921">
    <property type="protein sequence ID" value="BAG94830.1"/>
    <property type="molecule type" value="mRNA"/>
</dbReference>
<dbReference type="RefSeq" id="XP_015625422.1">
    <property type="nucleotide sequence ID" value="XM_015769936.1"/>
</dbReference>
<dbReference type="FunCoup" id="B9F4I8">
    <property type="interactions" value="100"/>
</dbReference>
<dbReference type="STRING" id="39947.B9F4I8"/>
<dbReference type="PaxDb" id="39947-B9F4I8"/>
<dbReference type="KEGG" id="dosa:Os02g0819400"/>
<dbReference type="eggNOG" id="ENOG502QR37">
    <property type="taxonomic scope" value="Eukaryota"/>
</dbReference>
<dbReference type="InParanoid" id="B9F4I8"/>
<dbReference type="OrthoDB" id="10263927at2759"/>
<dbReference type="PlantReactome" id="R-OSA-1119434">
    <property type="pathway name" value="Phytic acid biosynthesis (lipid-independent)"/>
</dbReference>
<dbReference type="Proteomes" id="UP000000763">
    <property type="component" value="Chromosome 2"/>
</dbReference>
<dbReference type="Proteomes" id="UP000007752">
    <property type="component" value="Chromosome 2"/>
</dbReference>
<dbReference type="Proteomes" id="UP000059680">
    <property type="component" value="Chromosome 2"/>
</dbReference>
<dbReference type="GO" id="GO:0010264">
    <property type="term" value="P:myo-inositol hexakisphosphate biosynthetic process"/>
    <property type="evidence" value="ECO:0000315"/>
    <property type="project" value="UniProtKB"/>
</dbReference>
<dbReference type="Gene3D" id="3.40.50.300">
    <property type="entry name" value="P-loop containing nucleotide triphosphate hydrolases"/>
    <property type="match status" value="1"/>
</dbReference>
<dbReference type="InterPro" id="IPR027417">
    <property type="entry name" value="P-loop_NTPase"/>
</dbReference>
<dbReference type="PANTHER" id="PTHR33477">
    <property type="entry name" value="P-LOOP NTPASE DOMAIN-CONTAINING PROTEIN LPA1 HOMOLOG 1"/>
    <property type="match status" value="1"/>
</dbReference>
<dbReference type="PANTHER" id="PTHR33477:SF3">
    <property type="entry name" value="P-LOOP NTPASE DOMAIN-CONTAINING PROTEIN LPA1 HOMOLOG 1"/>
    <property type="match status" value="1"/>
</dbReference>
<dbReference type="Pfam" id="PF13671">
    <property type="entry name" value="AAA_33"/>
    <property type="match status" value="1"/>
</dbReference>
<dbReference type="SUPFAM" id="SSF52540">
    <property type="entry name" value="P-loop containing nucleoside triphosphate hydrolases"/>
    <property type="match status" value="1"/>
</dbReference>
<feature type="chain" id="PRO_0000431864" description="P-loop NTPase domain-containing protein LPA1">
    <location>
        <begin position="1"/>
        <end position="714"/>
    </location>
</feature>
<feature type="region of interest" description="Disordered" evidence="1">
    <location>
        <begin position="1"/>
        <end position="42"/>
    </location>
</feature>
<feature type="region of interest" description="Disordered" evidence="1">
    <location>
        <begin position="259"/>
        <end position="293"/>
    </location>
</feature>
<feature type="region of interest" description="Disordered" evidence="1">
    <location>
        <begin position="595"/>
        <end position="689"/>
    </location>
</feature>
<feature type="compositionally biased region" description="Low complexity" evidence="1">
    <location>
        <begin position="1"/>
        <end position="11"/>
    </location>
</feature>
<feature type="compositionally biased region" description="Basic and acidic residues" evidence="1">
    <location>
        <begin position="271"/>
        <end position="285"/>
    </location>
</feature>
<feature type="compositionally biased region" description="Acidic residues" evidence="1">
    <location>
        <begin position="595"/>
        <end position="617"/>
    </location>
</feature>
<feature type="compositionally biased region" description="Basic and acidic residues" evidence="1">
    <location>
        <begin position="618"/>
        <end position="636"/>
    </location>
</feature>
<feature type="compositionally biased region" description="Polar residues" evidence="1">
    <location>
        <begin position="659"/>
        <end position="670"/>
    </location>
</feature>
<feature type="splice variant" id="VSP_057457" description="In isoform 2 and isoform 3.">
    <location>
        <begin position="1"/>
        <end position="219"/>
    </location>
</feature>
<feature type="splice variant" id="VSP_057458" description="In isoform 3.">
    <original>LMEDDYSV</original>
    <variation>VCIGVFTV</variation>
    <location>
        <begin position="587"/>
        <end position="594"/>
    </location>
</feature>
<feature type="splice variant" id="VSP_057459" description="In isoform 3.">
    <location>
        <begin position="595"/>
        <end position="714"/>
    </location>
</feature>
<evidence type="ECO:0000256" key="1">
    <source>
        <dbReference type="SAM" id="MobiDB-lite"/>
    </source>
</evidence>
<evidence type="ECO:0000269" key="2">
    <source>
    </source>
</evidence>
<evidence type="ECO:0000303" key="3">
    <source>
    </source>
</evidence>
<evidence type="ECO:0000305" key="4"/>
<evidence type="ECO:0000312" key="5">
    <source>
        <dbReference type="EMBL" id="BAF10448.1"/>
    </source>
</evidence>
<evidence type="ECO:0000312" key="6">
    <source>
        <dbReference type="EMBL" id="EEE58056.1"/>
    </source>
</evidence>
<reference key="1">
    <citation type="journal article" date="2008" name="Theor. Appl. Genet.">
        <title>The rice OsLpa1 gene encodes a novel protein involved in phytic acid metabolism.</title>
        <authorList>
            <person name="Kim S.I."/>
            <person name="Andaya C.B."/>
            <person name="Goyal S.S."/>
            <person name="Tai T.H."/>
        </authorList>
    </citation>
    <scope>NUCLEOTIDE SEQUENCE [MRNA] (ISOFORMS 1; 2 AND 3)</scope>
    <scope>FUNCTION</scope>
    <scope>ALTERNATIVE SPLICING</scope>
    <scope>TISSUE SPECIFICITY</scope>
    <scope>DISRUPTION PHENOTYPE</scope>
    <source>
        <strain>cv. Kaybonnet</strain>
    </source>
</reference>
<reference key="2">
    <citation type="journal article" date="2005" name="Nature">
        <title>The map-based sequence of the rice genome.</title>
        <authorList>
            <consortium name="International rice genome sequencing project (IRGSP)"/>
        </authorList>
    </citation>
    <scope>NUCLEOTIDE SEQUENCE [LARGE SCALE GENOMIC DNA]</scope>
    <source>
        <strain>cv. Nipponbare</strain>
    </source>
</reference>
<reference key="3">
    <citation type="journal article" date="2008" name="Nucleic Acids Res.">
        <title>The rice annotation project database (RAP-DB): 2008 update.</title>
        <authorList>
            <consortium name="The rice annotation project (RAP)"/>
        </authorList>
    </citation>
    <scope>GENOME REANNOTATION</scope>
    <source>
        <strain>cv. Nipponbare</strain>
    </source>
</reference>
<reference key="4">
    <citation type="journal article" date="2013" name="Rice">
        <title>Improvement of the Oryza sativa Nipponbare reference genome using next generation sequence and optical map data.</title>
        <authorList>
            <person name="Kawahara Y."/>
            <person name="de la Bastide M."/>
            <person name="Hamilton J.P."/>
            <person name="Kanamori H."/>
            <person name="McCombie W.R."/>
            <person name="Ouyang S."/>
            <person name="Schwartz D.C."/>
            <person name="Tanaka T."/>
            <person name="Wu J."/>
            <person name="Zhou S."/>
            <person name="Childs K.L."/>
            <person name="Davidson R.M."/>
            <person name="Lin H."/>
            <person name="Quesada-Ocampo L."/>
            <person name="Vaillancourt B."/>
            <person name="Sakai H."/>
            <person name="Lee S.S."/>
            <person name="Kim J."/>
            <person name="Numa H."/>
            <person name="Itoh T."/>
            <person name="Buell C.R."/>
            <person name="Matsumoto T."/>
        </authorList>
    </citation>
    <scope>GENOME REANNOTATION</scope>
    <source>
        <strain>cv. Nipponbare</strain>
    </source>
</reference>
<reference key="5">
    <citation type="journal article" date="2005" name="PLoS Biol.">
        <title>The genomes of Oryza sativa: a history of duplications.</title>
        <authorList>
            <person name="Yu J."/>
            <person name="Wang J."/>
            <person name="Lin W."/>
            <person name="Li S."/>
            <person name="Li H."/>
            <person name="Zhou J."/>
            <person name="Ni P."/>
            <person name="Dong W."/>
            <person name="Hu S."/>
            <person name="Zeng C."/>
            <person name="Zhang J."/>
            <person name="Zhang Y."/>
            <person name="Li R."/>
            <person name="Xu Z."/>
            <person name="Li S."/>
            <person name="Li X."/>
            <person name="Zheng H."/>
            <person name="Cong L."/>
            <person name="Lin L."/>
            <person name="Yin J."/>
            <person name="Geng J."/>
            <person name="Li G."/>
            <person name="Shi J."/>
            <person name="Liu J."/>
            <person name="Lv H."/>
            <person name="Li J."/>
            <person name="Wang J."/>
            <person name="Deng Y."/>
            <person name="Ran L."/>
            <person name="Shi X."/>
            <person name="Wang X."/>
            <person name="Wu Q."/>
            <person name="Li C."/>
            <person name="Ren X."/>
            <person name="Wang J."/>
            <person name="Wang X."/>
            <person name="Li D."/>
            <person name="Liu D."/>
            <person name="Zhang X."/>
            <person name="Ji Z."/>
            <person name="Zhao W."/>
            <person name="Sun Y."/>
            <person name="Zhang Z."/>
            <person name="Bao J."/>
            <person name="Han Y."/>
            <person name="Dong L."/>
            <person name="Ji J."/>
            <person name="Chen P."/>
            <person name="Wu S."/>
            <person name="Liu J."/>
            <person name="Xiao Y."/>
            <person name="Bu D."/>
            <person name="Tan J."/>
            <person name="Yang L."/>
            <person name="Ye C."/>
            <person name="Zhang J."/>
            <person name="Xu J."/>
            <person name="Zhou Y."/>
            <person name="Yu Y."/>
            <person name="Zhang B."/>
            <person name="Zhuang S."/>
            <person name="Wei H."/>
            <person name="Liu B."/>
            <person name="Lei M."/>
            <person name="Yu H."/>
            <person name="Li Y."/>
            <person name="Xu H."/>
            <person name="Wei S."/>
            <person name="He X."/>
            <person name="Fang L."/>
            <person name="Zhang Z."/>
            <person name="Zhang Y."/>
            <person name="Huang X."/>
            <person name="Su Z."/>
            <person name="Tong W."/>
            <person name="Li J."/>
            <person name="Tong Z."/>
            <person name="Li S."/>
            <person name="Ye J."/>
            <person name="Wang L."/>
            <person name="Fang L."/>
            <person name="Lei T."/>
            <person name="Chen C.-S."/>
            <person name="Chen H.-C."/>
            <person name="Xu Z."/>
            <person name="Li H."/>
            <person name="Huang H."/>
            <person name="Zhang F."/>
            <person name="Xu H."/>
            <person name="Li N."/>
            <person name="Zhao C."/>
            <person name="Li S."/>
            <person name="Dong L."/>
            <person name="Huang Y."/>
            <person name="Li L."/>
            <person name="Xi Y."/>
            <person name="Qi Q."/>
            <person name="Li W."/>
            <person name="Zhang B."/>
            <person name="Hu W."/>
            <person name="Zhang Y."/>
            <person name="Tian X."/>
            <person name="Jiao Y."/>
            <person name="Liang X."/>
            <person name="Jin J."/>
            <person name="Gao L."/>
            <person name="Zheng W."/>
            <person name="Hao B."/>
            <person name="Liu S.-M."/>
            <person name="Wang W."/>
            <person name="Yuan L."/>
            <person name="Cao M."/>
            <person name="McDermott J."/>
            <person name="Samudrala R."/>
            <person name="Wang J."/>
            <person name="Wong G.K.-S."/>
            <person name="Yang H."/>
        </authorList>
    </citation>
    <scope>NUCLEOTIDE SEQUENCE [LARGE SCALE GENOMIC DNA]</scope>
    <source>
        <strain>cv. Nipponbare</strain>
    </source>
</reference>
<reference key="6">
    <citation type="journal article" date="2003" name="Science">
        <title>Collection, mapping, and annotation of over 28,000 cDNA clones from japonica rice.</title>
        <authorList>
            <consortium name="The rice full-length cDNA consortium"/>
        </authorList>
    </citation>
    <scope>NUCLEOTIDE SEQUENCE [LARGE SCALE MRNA] (ISOFORM 2)</scope>
    <source>
        <strain>cv. Nipponbare</strain>
    </source>
</reference>
<organism>
    <name type="scientific">Oryza sativa subsp. japonica</name>
    <name type="common">Rice</name>
    <dbReference type="NCBI Taxonomy" id="39947"/>
    <lineage>
        <taxon>Eukaryota</taxon>
        <taxon>Viridiplantae</taxon>
        <taxon>Streptophyta</taxon>
        <taxon>Embryophyta</taxon>
        <taxon>Tracheophyta</taxon>
        <taxon>Spermatophyta</taxon>
        <taxon>Magnoliopsida</taxon>
        <taxon>Liliopsida</taxon>
        <taxon>Poales</taxon>
        <taxon>Poaceae</taxon>
        <taxon>BOP clade</taxon>
        <taxon>Oryzoideae</taxon>
        <taxon>Oryzeae</taxon>
        <taxon>Oryzinae</taxon>
        <taxon>Oryza</taxon>
        <taxon>Oryza sativa</taxon>
    </lineage>
</organism>
<sequence length="714" mass="78805">MPMPPQCASSKPPSPPPPPHPHEHEVGDDMAEEAPPPPPPPKLLYIAVSDAAARRAFRYTRPVLQGTLQLMGCKARHAFKISKRVFNVMRSEFLDASKSDTADNEENAPSLVKDVEMLKPKILEATLSSIPFELYKTQTTIVVSREKFLSVVCDALSSYKYVGPNQKADFLLACRIKERKESVTVLLCGTSGCGKSTLSSLLGSRLGITTVVSTDSIRHMMRGFTDEKQNPLLYASTYHAGECLDPVAVAQAKAKRKAQKLDIVSHPNTNEGRDDTSDDKAHHGSSELPPRTELIGSKQMAIEGFKAQSEMVIDSLDRLITSWEEQKQSVIVEGVHLSLNFVMGLMKKHPSIIPFMVYIANEEKHMERFAVRAKYMTLDPAKNRYIKYIRNIRAIQDYLCNRADKHLVPKINNTNVDQSVAAIHATVFSCLRRREAGEQLYDLNTNTVAVVNEEYRNQRAANSLGSKGMFQLIQRQGSSRNLMAILNTDGSVTKAWHVDKNNGNGSLDGTSSDKSTKNPMYDTFGKAEPVNLQFGSFGISAWMSDTGGTSHTGSVDDLRADGIETGGRYYSSCCSSPKVSDCPSKELMEDDYSVFGSEEDADDPPDAGTDEDLTDEERDMHEIEAGSVDEHSTKSDEEYDDLAMQDVMENGYWSDDEQAASSTKNSSNQEKNIHGAADGDVVDDEGSGNDRFHHNLAFFLKMSKKVAATELPCA</sequence>
<gene>
    <name evidence="3" type="primary">LPA1</name>
    <name evidence="5" type="ordered locus">Os02g0819400</name>
    <name evidence="4" type="ordered locus">LOC_Os02g57400</name>
    <name evidence="6" type="ORF">OsJ_08893</name>
</gene>
<proteinExistence type="evidence at transcript level"/>